<proteinExistence type="inferred from homology"/>
<organism>
    <name type="scientific">Synechococcus sp. (strain CC9902)</name>
    <dbReference type="NCBI Taxonomy" id="316279"/>
    <lineage>
        <taxon>Bacteria</taxon>
        <taxon>Bacillati</taxon>
        <taxon>Cyanobacteriota</taxon>
        <taxon>Cyanophyceae</taxon>
        <taxon>Synechococcales</taxon>
        <taxon>Synechococcaceae</taxon>
        <taxon>Synechococcus</taxon>
    </lineage>
</organism>
<gene>
    <name evidence="1" type="primary">gatC</name>
    <name type="ordered locus">Syncc9902_2057</name>
</gene>
<protein>
    <recommendedName>
        <fullName evidence="1">Aspartyl/glutamyl-tRNA(Asn/Gln) amidotransferase subunit C</fullName>
        <shortName evidence="1">Asp/Glu-ADT subunit C</shortName>
        <ecNumber evidence="1">6.3.5.-</ecNumber>
    </recommendedName>
</protein>
<feature type="chain" id="PRO_1000016234" description="Aspartyl/glutamyl-tRNA(Asn/Gln) amidotransferase subunit C">
    <location>
        <begin position="1"/>
        <end position="97"/>
    </location>
</feature>
<accession>Q3AW42</accession>
<evidence type="ECO:0000255" key="1">
    <source>
        <dbReference type="HAMAP-Rule" id="MF_00122"/>
    </source>
</evidence>
<name>GATC_SYNS9</name>
<comment type="function">
    <text evidence="1">Allows the formation of correctly charged Asn-tRNA(Asn) or Gln-tRNA(Gln) through the transamidation of misacylated Asp-tRNA(Asn) or Glu-tRNA(Gln) in organisms which lack either or both of asparaginyl-tRNA or glutaminyl-tRNA synthetases. The reaction takes place in the presence of glutamine and ATP through an activated phospho-Asp-tRNA(Asn) or phospho-Glu-tRNA(Gln).</text>
</comment>
<comment type="catalytic activity">
    <reaction evidence="1">
        <text>L-glutamyl-tRNA(Gln) + L-glutamine + ATP + H2O = L-glutaminyl-tRNA(Gln) + L-glutamate + ADP + phosphate + H(+)</text>
        <dbReference type="Rhea" id="RHEA:17521"/>
        <dbReference type="Rhea" id="RHEA-COMP:9681"/>
        <dbReference type="Rhea" id="RHEA-COMP:9684"/>
        <dbReference type="ChEBI" id="CHEBI:15377"/>
        <dbReference type="ChEBI" id="CHEBI:15378"/>
        <dbReference type="ChEBI" id="CHEBI:29985"/>
        <dbReference type="ChEBI" id="CHEBI:30616"/>
        <dbReference type="ChEBI" id="CHEBI:43474"/>
        <dbReference type="ChEBI" id="CHEBI:58359"/>
        <dbReference type="ChEBI" id="CHEBI:78520"/>
        <dbReference type="ChEBI" id="CHEBI:78521"/>
        <dbReference type="ChEBI" id="CHEBI:456216"/>
    </reaction>
</comment>
<comment type="catalytic activity">
    <reaction evidence="1">
        <text>L-aspartyl-tRNA(Asn) + L-glutamine + ATP + H2O = L-asparaginyl-tRNA(Asn) + L-glutamate + ADP + phosphate + 2 H(+)</text>
        <dbReference type="Rhea" id="RHEA:14513"/>
        <dbReference type="Rhea" id="RHEA-COMP:9674"/>
        <dbReference type="Rhea" id="RHEA-COMP:9677"/>
        <dbReference type="ChEBI" id="CHEBI:15377"/>
        <dbReference type="ChEBI" id="CHEBI:15378"/>
        <dbReference type="ChEBI" id="CHEBI:29985"/>
        <dbReference type="ChEBI" id="CHEBI:30616"/>
        <dbReference type="ChEBI" id="CHEBI:43474"/>
        <dbReference type="ChEBI" id="CHEBI:58359"/>
        <dbReference type="ChEBI" id="CHEBI:78515"/>
        <dbReference type="ChEBI" id="CHEBI:78516"/>
        <dbReference type="ChEBI" id="CHEBI:456216"/>
    </reaction>
</comment>
<comment type="subunit">
    <text evidence="1">Heterotrimer of A, B and C subunits.</text>
</comment>
<comment type="similarity">
    <text evidence="1">Belongs to the GatC family.</text>
</comment>
<reference key="1">
    <citation type="submission" date="2005-08" db="EMBL/GenBank/DDBJ databases">
        <title>Complete sequence of Synechococcus sp. CC9902.</title>
        <authorList>
            <person name="Copeland A."/>
            <person name="Lucas S."/>
            <person name="Lapidus A."/>
            <person name="Barry K."/>
            <person name="Detter J.C."/>
            <person name="Glavina T."/>
            <person name="Hammon N."/>
            <person name="Israni S."/>
            <person name="Pitluck S."/>
            <person name="Martinez M."/>
            <person name="Schmutz J."/>
            <person name="Larimer F."/>
            <person name="Land M."/>
            <person name="Kyrpides N."/>
            <person name="Ivanova N."/>
            <person name="Richardson P."/>
        </authorList>
    </citation>
    <scope>NUCLEOTIDE SEQUENCE [LARGE SCALE GENOMIC DNA]</scope>
    <source>
        <strain>CC9902</strain>
    </source>
</reference>
<sequence length="97" mass="10749">MSHISADDVRKVAKLARLNLPDDKIATYTGQLESILGYVSQLEQVDTTGVPETTRAVEVTNVTRQDGVDPTPVREEILNQAPQREGDFFRVPKILAD</sequence>
<keyword id="KW-0067">ATP-binding</keyword>
<keyword id="KW-0436">Ligase</keyword>
<keyword id="KW-0547">Nucleotide-binding</keyword>
<keyword id="KW-0648">Protein biosynthesis</keyword>
<keyword id="KW-1185">Reference proteome</keyword>
<dbReference type="EC" id="6.3.5.-" evidence="1"/>
<dbReference type="EMBL" id="CP000097">
    <property type="protein sequence ID" value="ABB27015.1"/>
    <property type="molecule type" value="Genomic_DNA"/>
</dbReference>
<dbReference type="RefSeq" id="WP_011360802.1">
    <property type="nucleotide sequence ID" value="NC_007513.1"/>
</dbReference>
<dbReference type="SMR" id="Q3AW42"/>
<dbReference type="STRING" id="316279.Syncc9902_2057"/>
<dbReference type="KEGG" id="sye:Syncc9902_2057"/>
<dbReference type="eggNOG" id="COG0721">
    <property type="taxonomic scope" value="Bacteria"/>
</dbReference>
<dbReference type="HOGENOM" id="CLU_105899_2_0_3"/>
<dbReference type="OrthoDB" id="9813938at2"/>
<dbReference type="Proteomes" id="UP000002712">
    <property type="component" value="Chromosome"/>
</dbReference>
<dbReference type="GO" id="GO:0050566">
    <property type="term" value="F:asparaginyl-tRNA synthase (glutamine-hydrolyzing) activity"/>
    <property type="evidence" value="ECO:0007669"/>
    <property type="project" value="RHEA"/>
</dbReference>
<dbReference type="GO" id="GO:0005524">
    <property type="term" value="F:ATP binding"/>
    <property type="evidence" value="ECO:0007669"/>
    <property type="project" value="UniProtKB-KW"/>
</dbReference>
<dbReference type="GO" id="GO:0050567">
    <property type="term" value="F:glutaminyl-tRNA synthase (glutamine-hydrolyzing) activity"/>
    <property type="evidence" value="ECO:0007669"/>
    <property type="project" value="UniProtKB-UniRule"/>
</dbReference>
<dbReference type="GO" id="GO:0070681">
    <property type="term" value="P:glutaminyl-tRNAGln biosynthesis via transamidation"/>
    <property type="evidence" value="ECO:0007669"/>
    <property type="project" value="TreeGrafter"/>
</dbReference>
<dbReference type="GO" id="GO:0006450">
    <property type="term" value="P:regulation of translational fidelity"/>
    <property type="evidence" value="ECO:0007669"/>
    <property type="project" value="InterPro"/>
</dbReference>
<dbReference type="GO" id="GO:0006412">
    <property type="term" value="P:translation"/>
    <property type="evidence" value="ECO:0007669"/>
    <property type="project" value="UniProtKB-UniRule"/>
</dbReference>
<dbReference type="Gene3D" id="1.10.20.60">
    <property type="entry name" value="Glu-tRNAGln amidotransferase C subunit, N-terminal domain"/>
    <property type="match status" value="1"/>
</dbReference>
<dbReference type="HAMAP" id="MF_00122">
    <property type="entry name" value="GatC"/>
    <property type="match status" value="1"/>
</dbReference>
<dbReference type="InterPro" id="IPR036113">
    <property type="entry name" value="Asp/Glu-ADT_sf_sub_c"/>
</dbReference>
<dbReference type="InterPro" id="IPR003837">
    <property type="entry name" value="GatC"/>
</dbReference>
<dbReference type="NCBIfam" id="TIGR00135">
    <property type="entry name" value="gatC"/>
    <property type="match status" value="1"/>
</dbReference>
<dbReference type="PANTHER" id="PTHR15004">
    <property type="entry name" value="GLUTAMYL-TRNA(GLN) AMIDOTRANSFERASE SUBUNIT C, MITOCHONDRIAL"/>
    <property type="match status" value="1"/>
</dbReference>
<dbReference type="PANTHER" id="PTHR15004:SF0">
    <property type="entry name" value="GLUTAMYL-TRNA(GLN) AMIDOTRANSFERASE SUBUNIT C, MITOCHONDRIAL"/>
    <property type="match status" value="1"/>
</dbReference>
<dbReference type="Pfam" id="PF02686">
    <property type="entry name" value="GatC"/>
    <property type="match status" value="1"/>
</dbReference>
<dbReference type="SUPFAM" id="SSF141000">
    <property type="entry name" value="Glu-tRNAGln amidotransferase C subunit"/>
    <property type="match status" value="1"/>
</dbReference>